<reference key="1">
    <citation type="submission" date="2000-09" db="EMBL/GenBank/DDBJ databases">
        <title>The oligopeptide permease oppF gene of Streptococcus pyogenes.</title>
        <authorList>
            <person name="Lin S.T."/>
            <person name="Wang C.H."/>
            <person name="Wu J.J."/>
        </authorList>
    </citation>
    <scope>NUCLEOTIDE SEQUENCE [GENOMIC DNA]</scope>
    <source>
        <strain>A-20 / Serotype M1,T1</strain>
    </source>
</reference>
<reference key="2">
    <citation type="journal article" date="2001" name="Proc. Natl. Acad. Sci. U.S.A.">
        <title>Complete genome sequence of an M1 strain of Streptococcus pyogenes.</title>
        <authorList>
            <person name="Ferretti J.J."/>
            <person name="McShan W.M."/>
            <person name="Ajdic D.J."/>
            <person name="Savic D.J."/>
            <person name="Savic G."/>
            <person name="Lyon K."/>
            <person name="Primeaux C."/>
            <person name="Sezate S."/>
            <person name="Suvorov A.N."/>
            <person name="Kenton S."/>
            <person name="Lai H.S."/>
            <person name="Lin S.P."/>
            <person name="Qian Y."/>
            <person name="Jia H.G."/>
            <person name="Najar F.Z."/>
            <person name="Ren Q."/>
            <person name="Zhu H."/>
            <person name="Song L."/>
            <person name="White J."/>
            <person name="Yuan X."/>
            <person name="Clifton S.W."/>
            <person name="Roe B.A."/>
            <person name="McLaughlin R.E."/>
        </authorList>
    </citation>
    <scope>NUCLEOTIDE SEQUENCE [LARGE SCALE GENOMIC DNA]</scope>
    <source>
        <strain>ATCC 700294 / SF370 / Serotype M1</strain>
    </source>
</reference>
<reference key="3">
    <citation type="journal article" date="2005" name="J. Infect. Dis.">
        <title>Evolutionary origin and emergence of a highly successful clone of serotype M1 group A Streptococcus involved multiple horizontal gene transfer events.</title>
        <authorList>
            <person name="Sumby P."/>
            <person name="Porcella S.F."/>
            <person name="Madrigal A.G."/>
            <person name="Barbian K.D."/>
            <person name="Virtaneva K."/>
            <person name="Ricklefs S.M."/>
            <person name="Sturdevant D.E."/>
            <person name="Graham M.R."/>
            <person name="Vuopio-Varkila J."/>
            <person name="Hoe N.P."/>
            <person name="Musser J.M."/>
        </authorList>
    </citation>
    <scope>NUCLEOTIDE SEQUENCE [LARGE SCALE GENOMIC DNA]</scope>
    <source>
        <strain>ATCC BAA-947 / MGAS5005 / Serotype M1</strain>
    </source>
</reference>
<comment type="function">
    <text evidence="1">Part of the ABC transporter complex OppABCDF involved in the uptake of oligopeptides (By similarity). Probably responsible for energy coupling to the transport system (By similarity).</text>
</comment>
<comment type="catalytic activity">
    <reaction evidence="1">
        <text>a [peptide](out) + ATP + H2O = a [peptide](in) + ADP + phosphate + H(+)</text>
        <dbReference type="Rhea" id="RHEA:78459"/>
        <dbReference type="Rhea" id="RHEA-COMP:19083"/>
        <dbReference type="ChEBI" id="CHEBI:15377"/>
        <dbReference type="ChEBI" id="CHEBI:15378"/>
        <dbReference type="ChEBI" id="CHEBI:30616"/>
        <dbReference type="ChEBI" id="CHEBI:33710"/>
        <dbReference type="ChEBI" id="CHEBI:43474"/>
        <dbReference type="ChEBI" id="CHEBI:456216"/>
        <dbReference type="EC" id="7.4.2.6"/>
    </reaction>
    <physiologicalReaction direction="left-to-right" evidence="1">
        <dbReference type="Rhea" id="RHEA:78460"/>
    </physiologicalReaction>
</comment>
<comment type="subunit">
    <text evidence="1">The complex is composed of two ATP-binding proteins (OppD and OppF), two transmembrane proteins (OppB and OppC) and a solute-binding protein (OppA).</text>
</comment>
<comment type="subcellular location">
    <subcellularLocation>
        <location evidence="1">Cell membrane</location>
        <topology evidence="1">Peripheral membrane protein</topology>
    </subcellularLocation>
</comment>
<comment type="similarity">
    <text evidence="3">Belongs to the ABC transporter superfamily.</text>
</comment>
<evidence type="ECO:0000250" key="1">
    <source>
        <dbReference type="UniProtKB" id="P24137"/>
    </source>
</evidence>
<evidence type="ECO:0000255" key="2">
    <source>
        <dbReference type="PROSITE-ProRule" id="PRU00434"/>
    </source>
</evidence>
<evidence type="ECO:0000305" key="3"/>
<keyword id="KW-0067">ATP-binding</keyword>
<keyword id="KW-1003">Cell membrane</keyword>
<keyword id="KW-0472">Membrane</keyword>
<keyword id="KW-0547">Nucleotide-binding</keyword>
<keyword id="KW-0571">Peptide transport</keyword>
<keyword id="KW-0653">Protein transport</keyword>
<keyword id="KW-1185">Reference proteome</keyword>
<keyword id="KW-1278">Translocase</keyword>
<keyword id="KW-0813">Transport</keyword>
<organism>
    <name type="scientific">Streptococcus pyogenes serotype M1</name>
    <dbReference type="NCBI Taxonomy" id="301447"/>
    <lineage>
        <taxon>Bacteria</taxon>
        <taxon>Bacillati</taxon>
        <taxon>Bacillota</taxon>
        <taxon>Bacilli</taxon>
        <taxon>Lactobacillales</taxon>
        <taxon>Streptococcaceae</taxon>
        <taxon>Streptococcus</taxon>
    </lineage>
</organism>
<accession>P0A2V6</accession>
<accession>Q490U6</accession>
<accession>Q9F5U1</accession>
<gene>
    <name type="primary">oppF</name>
    <name type="ordered locus">SPy_0297</name>
    <name type="ordered locus">M5005_Spy0253</name>
</gene>
<proteinExistence type="inferred from homology"/>
<protein>
    <recommendedName>
        <fullName evidence="3">Oligopeptide transport ATP-binding protein OppF</fullName>
        <ecNumber evidence="1">7.4.2.6</ecNumber>
    </recommendedName>
</protein>
<feature type="chain" id="PRO_0000092665" description="Oligopeptide transport ATP-binding protein OppF">
    <location>
        <begin position="1"/>
        <end position="307"/>
    </location>
</feature>
<feature type="domain" description="ABC transporter" evidence="2">
    <location>
        <begin position="6"/>
        <end position="251"/>
    </location>
</feature>
<feature type="binding site" evidence="2">
    <location>
        <begin position="42"/>
        <end position="49"/>
    </location>
    <ligand>
        <name>ATP</name>
        <dbReference type="ChEBI" id="CHEBI:30616"/>
    </ligand>
</feature>
<dbReference type="EC" id="7.4.2.6" evidence="1"/>
<dbReference type="EMBL" id="AF305548">
    <property type="protein sequence ID" value="AAG32327.1"/>
    <property type="molecule type" value="Genomic_DNA"/>
</dbReference>
<dbReference type="EMBL" id="AE004092">
    <property type="protein sequence ID" value="AAK33364.1"/>
    <property type="molecule type" value="Genomic_DNA"/>
</dbReference>
<dbReference type="EMBL" id="CP000017">
    <property type="protein sequence ID" value="AAZ50872.1"/>
    <property type="molecule type" value="Genomic_DNA"/>
</dbReference>
<dbReference type="RefSeq" id="NP_268643.1">
    <property type="nucleotide sequence ID" value="NC_002737.2"/>
</dbReference>
<dbReference type="SMR" id="P0A2V6"/>
<dbReference type="PaxDb" id="1314-HKU360_00292"/>
<dbReference type="KEGG" id="spy:SPy_0297"/>
<dbReference type="KEGG" id="spz:M5005_Spy0253"/>
<dbReference type="PATRIC" id="fig|160490.10.peg.261"/>
<dbReference type="HOGENOM" id="CLU_000604_1_23_9"/>
<dbReference type="OMA" id="GRYPHMF"/>
<dbReference type="Proteomes" id="UP000000750">
    <property type="component" value="Chromosome"/>
</dbReference>
<dbReference type="GO" id="GO:0005886">
    <property type="term" value="C:plasma membrane"/>
    <property type="evidence" value="ECO:0007669"/>
    <property type="project" value="UniProtKB-SubCell"/>
</dbReference>
<dbReference type="GO" id="GO:0005524">
    <property type="term" value="F:ATP binding"/>
    <property type="evidence" value="ECO:0007669"/>
    <property type="project" value="UniProtKB-KW"/>
</dbReference>
<dbReference type="GO" id="GO:0016887">
    <property type="term" value="F:ATP hydrolysis activity"/>
    <property type="evidence" value="ECO:0007669"/>
    <property type="project" value="InterPro"/>
</dbReference>
<dbReference type="GO" id="GO:0015833">
    <property type="term" value="P:peptide transport"/>
    <property type="evidence" value="ECO:0007669"/>
    <property type="project" value="UniProtKB-KW"/>
</dbReference>
<dbReference type="GO" id="GO:0015031">
    <property type="term" value="P:protein transport"/>
    <property type="evidence" value="ECO:0007669"/>
    <property type="project" value="UniProtKB-KW"/>
</dbReference>
<dbReference type="GO" id="GO:0055085">
    <property type="term" value="P:transmembrane transport"/>
    <property type="evidence" value="ECO:0007669"/>
    <property type="project" value="UniProtKB-ARBA"/>
</dbReference>
<dbReference type="CDD" id="cd03257">
    <property type="entry name" value="ABC_NikE_OppD_transporters"/>
    <property type="match status" value="1"/>
</dbReference>
<dbReference type="FunFam" id="3.40.50.300:FF:000016">
    <property type="entry name" value="Oligopeptide ABC transporter ATP-binding component"/>
    <property type="match status" value="1"/>
</dbReference>
<dbReference type="Gene3D" id="3.40.50.300">
    <property type="entry name" value="P-loop containing nucleotide triphosphate hydrolases"/>
    <property type="match status" value="1"/>
</dbReference>
<dbReference type="InterPro" id="IPR003593">
    <property type="entry name" value="AAA+_ATPase"/>
</dbReference>
<dbReference type="InterPro" id="IPR050319">
    <property type="entry name" value="ABC_transp_ATP-bind"/>
</dbReference>
<dbReference type="InterPro" id="IPR003439">
    <property type="entry name" value="ABC_transporter-like_ATP-bd"/>
</dbReference>
<dbReference type="InterPro" id="IPR017871">
    <property type="entry name" value="ABC_transporter-like_CS"/>
</dbReference>
<dbReference type="InterPro" id="IPR013563">
    <property type="entry name" value="Oligopep_ABC_C"/>
</dbReference>
<dbReference type="InterPro" id="IPR027417">
    <property type="entry name" value="P-loop_NTPase"/>
</dbReference>
<dbReference type="PANTHER" id="PTHR43776:SF7">
    <property type="entry name" value="D,D-DIPEPTIDE TRANSPORT ATP-BINDING PROTEIN DDPF-RELATED"/>
    <property type="match status" value="1"/>
</dbReference>
<dbReference type="PANTHER" id="PTHR43776">
    <property type="entry name" value="TRANSPORT ATP-BINDING PROTEIN"/>
    <property type="match status" value="1"/>
</dbReference>
<dbReference type="Pfam" id="PF00005">
    <property type="entry name" value="ABC_tran"/>
    <property type="match status" value="1"/>
</dbReference>
<dbReference type="Pfam" id="PF08352">
    <property type="entry name" value="oligo_HPY"/>
    <property type="match status" value="1"/>
</dbReference>
<dbReference type="SMART" id="SM00382">
    <property type="entry name" value="AAA"/>
    <property type="match status" value="1"/>
</dbReference>
<dbReference type="SUPFAM" id="SSF52540">
    <property type="entry name" value="P-loop containing nucleoside triphosphate hydrolases"/>
    <property type="match status" value="1"/>
</dbReference>
<dbReference type="PROSITE" id="PS00211">
    <property type="entry name" value="ABC_TRANSPORTER_1"/>
    <property type="match status" value="1"/>
</dbReference>
<dbReference type="PROSITE" id="PS50893">
    <property type="entry name" value="ABC_TRANSPORTER_2"/>
    <property type="match status" value="1"/>
</dbReference>
<sequence length="307" mass="34716">MSEKLVEVKDLEISFGEGKKKFVAVKNANFFIKKGETFSLVGESGSGKTTIGRAIIGLNDTSSGQILYDGKVINGRKSKSEANELIRKIQMIFQDPAASLNERATVDYIISEGLYNFNLFKTEEERKEKIKNMMAEVGLLSEHLTRYPHEFSGGQRQRIGIARALVMNPEFVIADEPISALDVSVRAQVLNLLKRMQAEKGLTYLFIAHDLSVVRFISDRIAVIHKGVIVEVAETEELFNNPIHPYTQSLLSAVPIPDPILERQKELVVYHPDQHDYTLDKPSMVEIKPNHFVWANQAEIEKYQKEL</sequence>
<name>OPPF_STRP1</name>